<keyword id="KW-1003">Cell membrane</keyword>
<keyword id="KW-0966">Cell projection</keyword>
<keyword id="KW-0963">Cytoplasm</keyword>
<keyword id="KW-0968">Cytoplasmic vesicle</keyword>
<keyword id="KW-0254">Endocytosis</keyword>
<keyword id="KW-0967">Endosome</keyword>
<keyword id="KW-0342">GTP-binding</keyword>
<keyword id="KW-0378">Hydrolase</keyword>
<keyword id="KW-0449">Lipoprotein</keyword>
<keyword id="KW-0460">Magnesium</keyword>
<keyword id="KW-0472">Membrane</keyword>
<keyword id="KW-0479">Metal-binding</keyword>
<keyword id="KW-0547">Nucleotide-binding</keyword>
<keyword id="KW-0581">Phagocytosis</keyword>
<keyword id="KW-0597">Phosphoprotein</keyword>
<keyword id="KW-0636">Prenylation</keyword>
<keyword id="KW-0653">Protein transport</keyword>
<keyword id="KW-1185">Reference proteome</keyword>
<keyword id="KW-0813">Transport</keyword>
<protein>
    <recommendedName>
        <fullName>Ras-related protein Rab-5A</fullName>
        <ecNumber evidence="1">3.6.5.2</ecNumber>
    </recommendedName>
</protein>
<organism>
    <name type="scientific">Canis lupus familiaris</name>
    <name type="common">Dog</name>
    <name type="synonym">Canis familiaris</name>
    <dbReference type="NCBI Taxonomy" id="9615"/>
    <lineage>
        <taxon>Eukaryota</taxon>
        <taxon>Metazoa</taxon>
        <taxon>Chordata</taxon>
        <taxon>Craniata</taxon>
        <taxon>Vertebrata</taxon>
        <taxon>Euteleostomi</taxon>
        <taxon>Mammalia</taxon>
        <taxon>Eutheria</taxon>
        <taxon>Laurasiatheria</taxon>
        <taxon>Carnivora</taxon>
        <taxon>Caniformia</taxon>
        <taxon>Canidae</taxon>
        <taxon>Canis</taxon>
    </lineage>
</organism>
<sequence length="215" mass="23659">MANRGATRPNGPNTGNKICQFKLVLLGESAVGKSSLVLRFVKGQFHEFQESTIGAAFLTQTVCLDDTTVKFEIWDTAGQERYHSLAPMYYRGAQAAIVVYDITNEESFARAKNWVKELQRQASPNIVIALSGNKADLANKRAVDFQEAQSYADDNSLLFMETSAKTSMNVNEIFMAIAKKLPKNEPQNPGANSARGRGVDLTEPTQPTRSQCCSN</sequence>
<gene>
    <name type="primary">RAB5A</name>
</gene>
<comment type="function">
    <text evidence="1 3 8">The small GTPases Rab are key regulators of intracellular membrane trafficking, from the formation of transport vesicles to their fusion with membranes. Rabs cycle between an inactive GDP-bound form and an active GTP-bound form that is able to recruit to membranes different sets of downstream effectors directly responsible for vesicle formation, movement, tethering and fusion (PubMed:8521472). RAB5A is required for the fusion of plasma membranes and early endosomes. Contributes to the regulation of filopodia extension. Required for the exosomal release of SDCBP, CD63, PDCD6IP and syndecan. Regulates maturation of apoptotic cell-containing phagosomes, probably downstream of DYN2 and PIK3C3 (By similarity).</text>
</comment>
<comment type="catalytic activity">
    <reaction evidence="1">
        <text>GTP + H2O = GDP + phosphate + H(+)</text>
        <dbReference type="Rhea" id="RHEA:19669"/>
        <dbReference type="ChEBI" id="CHEBI:15377"/>
        <dbReference type="ChEBI" id="CHEBI:15378"/>
        <dbReference type="ChEBI" id="CHEBI:37565"/>
        <dbReference type="ChEBI" id="CHEBI:43474"/>
        <dbReference type="ChEBI" id="CHEBI:58189"/>
        <dbReference type="EC" id="3.6.5.2"/>
    </reaction>
    <physiologicalReaction direction="left-to-right" evidence="1">
        <dbReference type="Rhea" id="RHEA:19670"/>
    </physiologicalReaction>
</comment>
<comment type="cofactor">
    <cofactor evidence="1">
        <name>Mg(2+)</name>
        <dbReference type="ChEBI" id="CHEBI:18420"/>
    </cofactor>
</comment>
<comment type="activity regulation">
    <text evidence="7 9">Regulated by guanine nucleotide exchange factors (GEFs) including RINL, which promote the exchange of bound GDP for free GTP (PubMed:21419809). Regulated by GTPase activating proteins (GAPs) which increase the GTP hydrolysis activity (Probable). Inhibited by GDP dissociation inhibitors (GDIs) (Probable).</text>
</comment>
<comment type="subunit">
    <text evidence="1 2 3 5 7 8">Interacts with GDI1; this promotes dissociation from membranes; phosphorylation at Ser-84 disrupts this interaction (By similarity). Interacts with GDI2; phosphorylation at Ser-84 disrupts the interaction (By similarity). Binds EEA1. Interacts with ALS2CL, SUN2, ZFYVE20 and RUFY1. Interacts with RIN1 and GAPVD1, which regulate its pathway, probably by acting as a GEF. Interacts with SGSM1 and SGSM3. Interacts with PIK3CB (By similarity). Interacts with RABEP1 and RINL (PubMed:21419809, PubMed:8521472). Interacts with OCRL and INPP5F. May be a component of a complex composed of RAB5A, DYN2 and PIK3C3 (By similarity). Does not interact with the BLOC-3 complex (heterodimer of HPS1 and HPS4) (PubMed:20048159). Interacts with CLN5 (By similarity). Interacts with APPL2 (By similarity). Interacts with F8A1/F8A2/F8A3 (By similarity). Found in a complex with F8A1/F8A2/F8A3, HTT and RAB5A; mediates the recruitment of HTT by RAB5A onto early endosomes (By similarity). Interacts with ATP9A (By similarity). Interacts with PPP1R21; mediates the recruitment of FERRY complex by RAB5A onto early endosomes (By similarity).</text>
</comment>
<comment type="subcellular location">
    <subcellularLocation>
        <location evidence="6">Cell membrane</location>
        <topology evidence="9">Lipid-anchor</topology>
        <orientation evidence="6">Cytoplasmic side</orientation>
    </subcellularLocation>
    <subcellularLocation>
        <location evidence="6">Early endosome membrane</location>
        <topology evidence="9">Lipid-anchor</topology>
    </subcellularLocation>
    <subcellularLocation>
        <location evidence="1">Melanosome</location>
    </subcellularLocation>
    <subcellularLocation>
        <location evidence="6">Cytoplasmic vesicle</location>
    </subcellularLocation>
    <subcellularLocation>
        <location evidence="7">Cell projection</location>
        <location evidence="7">Ruffle</location>
    </subcellularLocation>
    <subcellularLocation>
        <location evidence="1">Cytoplasm</location>
        <location evidence="1">Cytosol</location>
    </subcellularLocation>
    <subcellularLocation>
        <location evidence="6">Membrane</location>
    </subcellularLocation>
    <subcellularLocation>
        <location evidence="3">Cytoplasmic vesicle</location>
        <location evidence="3">Phagosome membrane</location>
    </subcellularLocation>
    <subcellularLocation>
        <location evidence="1">Endosome membrane</location>
    </subcellularLocation>
    <text evidence="1">Alternates between membrane-bound and cytosolic forms.</text>
</comment>
<comment type="domain">
    <text evidence="1">Switch 1, switch 2 and the interswitch regions are characteristic of Rab GTPases and mediate the interactions with Rab downstream effectors. The switch regions undergo conformational changes upon nucleotide binding which drive interaction with specific sets of effector proteins, with most effectors only binding to GTP-bound Rab.</text>
</comment>
<comment type="PTM">
    <text evidence="1">Phosphorylation of Ser-84 in the switch II region by LRRK2 prevents the association of RAB regulatory proteins, including RAB GDP dissociation inhibitors GDI1 and GDI2.</text>
</comment>
<comment type="similarity">
    <text evidence="9">Belongs to the small GTPase superfamily. Rab family.</text>
</comment>
<evidence type="ECO:0000250" key="1">
    <source>
        <dbReference type="UniProtKB" id="P20339"/>
    </source>
</evidence>
<evidence type="ECO:0000250" key="2">
    <source>
        <dbReference type="UniProtKB" id="Q0IIG7"/>
    </source>
</evidence>
<evidence type="ECO:0000250" key="3">
    <source>
        <dbReference type="UniProtKB" id="Q9CQD1"/>
    </source>
</evidence>
<evidence type="ECO:0000256" key="4">
    <source>
        <dbReference type="SAM" id="MobiDB-lite"/>
    </source>
</evidence>
<evidence type="ECO:0000269" key="5">
    <source>
    </source>
</evidence>
<evidence type="ECO:0000269" key="6">
    <source>
    </source>
</evidence>
<evidence type="ECO:0000269" key="7">
    <source>
    </source>
</evidence>
<evidence type="ECO:0000269" key="8">
    <source>
    </source>
</evidence>
<evidence type="ECO:0000305" key="9"/>
<dbReference type="EC" id="3.6.5.2" evidence="1"/>
<dbReference type="EMBL" id="M35520">
    <property type="protein sequence ID" value="AAA30889.1"/>
    <property type="molecule type" value="mRNA"/>
</dbReference>
<dbReference type="PIR" id="A30413">
    <property type="entry name" value="A30413"/>
</dbReference>
<dbReference type="RefSeq" id="NP_001003317.1">
    <property type="nucleotide sequence ID" value="NM_001003317.2"/>
</dbReference>
<dbReference type="RefSeq" id="XP_038287515.1">
    <property type="nucleotide sequence ID" value="XM_038431587.1"/>
</dbReference>
<dbReference type="SMR" id="P18066"/>
<dbReference type="FunCoup" id="P18066">
    <property type="interactions" value="3657"/>
</dbReference>
<dbReference type="IntAct" id="P18066">
    <property type="interactions" value="7"/>
</dbReference>
<dbReference type="STRING" id="9615.ENSCAFP00000008690"/>
<dbReference type="PaxDb" id="9612-ENSCAFP00000008690"/>
<dbReference type="Ensembl" id="ENSCAFT00000009363.4">
    <property type="protein sequence ID" value="ENSCAFP00000008690.3"/>
    <property type="gene ID" value="ENSCAFG00000005814.4"/>
</dbReference>
<dbReference type="Ensembl" id="ENSCAFT00030043680.1">
    <property type="protein sequence ID" value="ENSCAFP00030038124.1"/>
    <property type="gene ID" value="ENSCAFG00030023727.1"/>
</dbReference>
<dbReference type="Ensembl" id="ENSCAFT00040042303.1">
    <property type="protein sequence ID" value="ENSCAFP00040036899.1"/>
    <property type="gene ID" value="ENSCAFG00040022761.1"/>
</dbReference>
<dbReference type="Ensembl" id="ENSCAFT00845037438.1">
    <property type="protein sequence ID" value="ENSCAFP00845029329.1"/>
    <property type="gene ID" value="ENSCAFG00845021204.1"/>
</dbReference>
<dbReference type="GeneID" id="404008"/>
<dbReference type="KEGG" id="cfa:404008"/>
<dbReference type="CTD" id="5868"/>
<dbReference type="VEuPathDB" id="HostDB:ENSCAFG00845021204"/>
<dbReference type="VGNC" id="VGNC:45291">
    <property type="gene designation" value="RAB5A"/>
</dbReference>
<dbReference type="eggNOG" id="KOG0092">
    <property type="taxonomic scope" value="Eukaryota"/>
</dbReference>
<dbReference type="GeneTree" id="ENSGT00940000154337"/>
<dbReference type="HOGENOM" id="CLU_041217_10_2_1"/>
<dbReference type="InParanoid" id="P18066"/>
<dbReference type="OMA" id="GASFFRY"/>
<dbReference type="OrthoDB" id="63533at2759"/>
<dbReference type="TreeFam" id="TF300199"/>
<dbReference type="Reactome" id="R-CFA-8856828">
    <property type="pathway name" value="Clathrin-mediated endocytosis"/>
</dbReference>
<dbReference type="Reactome" id="R-CFA-8873719">
    <property type="pathway name" value="RAB geranylgeranylation"/>
</dbReference>
<dbReference type="Reactome" id="R-CFA-8876198">
    <property type="pathway name" value="RAB GEFs exchange GTP for GDP on RABs"/>
</dbReference>
<dbReference type="Reactome" id="R-CFA-983231">
    <property type="pathway name" value="Factors involved in megakaryocyte development and platelet production"/>
</dbReference>
<dbReference type="Proteomes" id="UP000002254">
    <property type="component" value="Chromosome 23"/>
</dbReference>
<dbReference type="Proteomes" id="UP000694429">
    <property type="component" value="Chromosome 23"/>
</dbReference>
<dbReference type="Proteomes" id="UP000694542">
    <property type="component" value="Chromosome 23"/>
</dbReference>
<dbReference type="Proteomes" id="UP000805418">
    <property type="component" value="Chromosome 23"/>
</dbReference>
<dbReference type="Bgee" id="ENSCAFG00000005814">
    <property type="expression patterns" value="Expressed in occipital cortex and 46 other cell types or tissues"/>
</dbReference>
<dbReference type="GO" id="GO:0015629">
    <property type="term" value="C:actin cytoskeleton"/>
    <property type="evidence" value="ECO:0007669"/>
    <property type="project" value="Ensembl"/>
</dbReference>
<dbReference type="GO" id="GO:0030424">
    <property type="term" value="C:axon"/>
    <property type="evidence" value="ECO:0000318"/>
    <property type="project" value="GO_Central"/>
</dbReference>
<dbReference type="GO" id="GO:0098559">
    <property type="term" value="C:cytoplasmic side of early endosome membrane"/>
    <property type="evidence" value="ECO:0007669"/>
    <property type="project" value="Ensembl"/>
</dbReference>
<dbReference type="GO" id="GO:0005829">
    <property type="term" value="C:cytosol"/>
    <property type="evidence" value="ECO:0007669"/>
    <property type="project" value="UniProtKB-SubCell"/>
</dbReference>
<dbReference type="GO" id="GO:0030425">
    <property type="term" value="C:dendrite"/>
    <property type="evidence" value="ECO:0000318"/>
    <property type="project" value="GO_Central"/>
</dbReference>
<dbReference type="GO" id="GO:0005769">
    <property type="term" value="C:early endosome"/>
    <property type="evidence" value="ECO:0000250"/>
    <property type="project" value="UniProtKB"/>
</dbReference>
<dbReference type="GO" id="GO:0032009">
    <property type="term" value="C:early phagosome"/>
    <property type="evidence" value="ECO:0000250"/>
    <property type="project" value="UniProtKB"/>
</dbReference>
<dbReference type="GO" id="GO:0030139">
    <property type="term" value="C:endocytic vesicle"/>
    <property type="evidence" value="ECO:0000318"/>
    <property type="project" value="GO_Central"/>
</dbReference>
<dbReference type="GO" id="GO:0012505">
    <property type="term" value="C:endomembrane system"/>
    <property type="evidence" value="ECO:0000318"/>
    <property type="project" value="GO_Central"/>
</dbReference>
<dbReference type="GO" id="GO:0070382">
    <property type="term" value="C:exocytic vesicle"/>
    <property type="evidence" value="ECO:0000314"/>
    <property type="project" value="CAFA"/>
</dbReference>
<dbReference type="GO" id="GO:0005811">
    <property type="term" value="C:lipid droplet"/>
    <property type="evidence" value="ECO:0000314"/>
    <property type="project" value="UniProtKB"/>
</dbReference>
<dbReference type="GO" id="GO:0042470">
    <property type="term" value="C:melanosome"/>
    <property type="evidence" value="ECO:0007669"/>
    <property type="project" value="UniProtKB-SubCell"/>
</dbReference>
<dbReference type="GO" id="GO:0045121">
    <property type="term" value="C:membrane raft"/>
    <property type="evidence" value="ECO:0007669"/>
    <property type="project" value="Ensembl"/>
</dbReference>
<dbReference type="GO" id="GO:0005654">
    <property type="term" value="C:nucleoplasm"/>
    <property type="evidence" value="ECO:0007669"/>
    <property type="project" value="Ensembl"/>
</dbReference>
<dbReference type="GO" id="GO:0045335">
    <property type="term" value="C:phagocytic vesicle"/>
    <property type="evidence" value="ECO:0000250"/>
    <property type="project" value="UniProtKB"/>
</dbReference>
<dbReference type="GO" id="GO:0030670">
    <property type="term" value="C:phagocytic vesicle membrane"/>
    <property type="evidence" value="ECO:0007669"/>
    <property type="project" value="UniProtKB-SubCell"/>
</dbReference>
<dbReference type="GO" id="GO:0005886">
    <property type="term" value="C:plasma membrane"/>
    <property type="evidence" value="ECO:0000318"/>
    <property type="project" value="GO_Central"/>
</dbReference>
<dbReference type="GO" id="GO:0001726">
    <property type="term" value="C:ruffle"/>
    <property type="evidence" value="ECO:0007669"/>
    <property type="project" value="UniProtKB-SubCell"/>
</dbReference>
<dbReference type="GO" id="GO:0097443">
    <property type="term" value="C:sorting endosome"/>
    <property type="evidence" value="ECO:0000314"/>
    <property type="project" value="CAFA"/>
</dbReference>
<dbReference type="GO" id="GO:0030672">
    <property type="term" value="C:synaptic vesicle membrane"/>
    <property type="evidence" value="ECO:0000318"/>
    <property type="project" value="GO_Central"/>
</dbReference>
<dbReference type="GO" id="GO:0043195">
    <property type="term" value="C:terminal bouton"/>
    <property type="evidence" value="ECO:0007669"/>
    <property type="project" value="Ensembl"/>
</dbReference>
<dbReference type="GO" id="GO:0003925">
    <property type="term" value="F:G protein activity"/>
    <property type="evidence" value="ECO:0007669"/>
    <property type="project" value="UniProtKB-EC"/>
</dbReference>
<dbReference type="GO" id="GO:0019003">
    <property type="term" value="F:GDP binding"/>
    <property type="evidence" value="ECO:0000250"/>
    <property type="project" value="UniProtKB"/>
</dbReference>
<dbReference type="GO" id="GO:0005525">
    <property type="term" value="F:GTP binding"/>
    <property type="evidence" value="ECO:0000250"/>
    <property type="project" value="UniProtKB"/>
</dbReference>
<dbReference type="GO" id="GO:0003924">
    <property type="term" value="F:GTPase activity"/>
    <property type="evidence" value="ECO:0000250"/>
    <property type="project" value="UniProtKB"/>
</dbReference>
<dbReference type="GO" id="GO:0150093">
    <property type="term" value="P:amyloid-beta clearance by transcytosis"/>
    <property type="evidence" value="ECO:0007669"/>
    <property type="project" value="Ensembl"/>
</dbReference>
<dbReference type="GO" id="GO:0060070">
    <property type="term" value="P:canonical Wnt signaling pathway"/>
    <property type="evidence" value="ECO:0007669"/>
    <property type="project" value="Ensembl"/>
</dbReference>
<dbReference type="GO" id="GO:0045022">
    <property type="term" value="P:early endosome to late endosome transport"/>
    <property type="evidence" value="ECO:0007669"/>
    <property type="project" value="Ensembl"/>
</dbReference>
<dbReference type="GO" id="GO:0006897">
    <property type="term" value="P:endocytosis"/>
    <property type="evidence" value="ECO:0000250"/>
    <property type="project" value="UniProtKB"/>
</dbReference>
<dbReference type="GO" id="GO:0006886">
    <property type="term" value="P:intracellular protein transport"/>
    <property type="evidence" value="ECO:0000318"/>
    <property type="project" value="GO_Central"/>
</dbReference>
<dbReference type="GO" id="GO:0044788">
    <property type="term" value="P:modulation by host of viral process"/>
    <property type="evidence" value="ECO:0007669"/>
    <property type="project" value="Ensembl"/>
</dbReference>
<dbReference type="GO" id="GO:0006909">
    <property type="term" value="P:phagocytosis"/>
    <property type="evidence" value="ECO:0007669"/>
    <property type="project" value="UniProtKB-KW"/>
</dbReference>
<dbReference type="GO" id="GO:0045921">
    <property type="term" value="P:positive regulation of exocytosis"/>
    <property type="evidence" value="ECO:0007669"/>
    <property type="project" value="Ensembl"/>
</dbReference>
<dbReference type="GO" id="GO:0031623">
    <property type="term" value="P:receptor internalization"/>
    <property type="evidence" value="ECO:0007669"/>
    <property type="project" value="Ensembl"/>
</dbReference>
<dbReference type="GO" id="GO:0051036">
    <property type="term" value="P:regulation of endosome size"/>
    <property type="evidence" value="ECO:0007669"/>
    <property type="project" value="Ensembl"/>
</dbReference>
<dbReference type="GO" id="GO:0051489">
    <property type="term" value="P:regulation of filopodium assembly"/>
    <property type="evidence" value="ECO:0007669"/>
    <property type="project" value="Ensembl"/>
</dbReference>
<dbReference type="GO" id="GO:0048169">
    <property type="term" value="P:regulation of long-term neuronal synaptic plasticity"/>
    <property type="evidence" value="ECO:0000318"/>
    <property type="project" value="GO_Central"/>
</dbReference>
<dbReference type="GO" id="GO:2000300">
    <property type="term" value="P:regulation of synaptic vesicle exocytosis"/>
    <property type="evidence" value="ECO:0007669"/>
    <property type="project" value="Ensembl"/>
</dbReference>
<dbReference type="GO" id="GO:0036465">
    <property type="term" value="P:synaptic vesicle recycling"/>
    <property type="evidence" value="ECO:0007669"/>
    <property type="project" value="Ensembl"/>
</dbReference>
<dbReference type="CDD" id="cd01860">
    <property type="entry name" value="Rab5_related"/>
    <property type="match status" value="1"/>
</dbReference>
<dbReference type="FunFam" id="3.40.50.300:FF:000180">
    <property type="entry name" value="Member RAS oncogene family"/>
    <property type="match status" value="1"/>
</dbReference>
<dbReference type="Gene3D" id="3.40.50.300">
    <property type="entry name" value="P-loop containing nucleotide triphosphate hydrolases"/>
    <property type="match status" value="1"/>
</dbReference>
<dbReference type="InterPro" id="IPR027417">
    <property type="entry name" value="P-loop_NTPase"/>
</dbReference>
<dbReference type="InterPro" id="IPR005225">
    <property type="entry name" value="Small_GTP-bd"/>
</dbReference>
<dbReference type="InterPro" id="IPR001806">
    <property type="entry name" value="Small_GTPase"/>
</dbReference>
<dbReference type="NCBIfam" id="TIGR00231">
    <property type="entry name" value="small_GTP"/>
    <property type="match status" value="1"/>
</dbReference>
<dbReference type="PANTHER" id="PTHR47978">
    <property type="match status" value="1"/>
</dbReference>
<dbReference type="Pfam" id="PF00071">
    <property type="entry name" value="Ras"/>
    <property type="match status" value="1"/>
</dbReference>
<dbReference type="PRINTS" id="PR00449">
    <property type="entry name" value="RASTRNSFRMNG"/>
</dbReference>
<dbReference type="SMART" id="SM00175">
    <property type="entry name" value="RAB"/>
    <property type="match status" value="1"/>
</dbReference>
<dbReference type="SMART" id="SM00176">
    <property type="entry name" value="RAN"/>
    <property type="match status" value="1"/>
</dbReference>
<dbReference type="SMART" id="SM00173">
    <property type="entry name" value="RAS"/>
    <property type="match status" value="1"/>
</dbReference>
<dbReference type="SMART" id="SM00174">
    <property type="entry name" value="RHO"/>
    <property type="match status" value="1"/>
</dbReference>
<dbReference type="SUPFAM" id="SSF52540">
    <property type="entry name" value="P-loop containing nucleoside triphosphate hydrolases"/>
    <property type="match status" value="1"/>
</dbReference>
<dbReference type="PROSITE" id="PS51419">
    <property type="entry name" value="RAB"/>
    <property type="match status" value="1"/>
</dbReference>
<name>RAB5A_CANLF</name>
<feature type="chain" id="PRO_0000121103" description="Ras-related protein Rab-5A">
    <location>
        <begin position="1"/>
        <end position="215"/>
    </location>
</feature>
<feature type="region of interest" description="Disordered" evidence="4">
    <location>
        <begin position="181"/>
        <end position="215"/>
    </location>
</feature>
<feature type="short sequence motif" description="Switch 1" evidence="1">
    <location>
        <begin position="44"/>
        <end position="56"/>
    </location>
</feature>
<feature type="short sequence motif" description="Switch 2" evidence="1">
    <location>
        <begin position="77"/>
        <end position="93"/>
    </location>
</feature>
<feature type="compositionally biased region" description="Polar residues" evidence="4">
    <location>
        <begin position="203"/>
        <end position="215"/>
    </location>
</feature>
<feature type="binding site" evidence="1">
    <location>
        <position position="29"/>
    </location>
    <ligand>
        <name>GTP</name>
        <dbReference type="ChEBI" id="CHEBI:37565"/>
    </ligand>
</feature>
<feature type="binding site" evidence="1">
    <location>
        <position position="30"/>
    </location>
    <ligand>
        <name>GTP</name>
        <dbReference type="ChEBI" id="CHEBI:37565"/>
    </ligand>
</feature>
<feature type="binding site" evidence="1">
    <location>
        <position position="32"/>
    </location>
    <ligand>
        <name>GTP</name>
        <dbReference type="ChEBI" id="CHEBI:37565"/>
    </ligand>
</feature>
<feature type="binding site" evidence="1">
    <location>
        <position position="33"/>
    </location>
    <ligand>
        <name>GTP</name>
        <dbReference type="ChEBI" id="CHEBI:37565"/>
    </ligand>
</feature>
<feature type="binding site" evidence="1">
    <location>
        <position position="34"/>
    </location>
    <ligand>
        <name>GTP</name>
        <dbReference type="ChEBI" id="CHEBI:37565"/>
    </ligand>
</feature>
<feature type="binding site" evidence="1">
    <location>
        <position position="34"/>
    </location>
    <ligand>
        <name>Mg(2+)</name>
        <dbReference type="ChEBI" id="CHEBI:18420"/>
    </ligand>
</feature>
<feature type="binding site" evidence="1">
    <location>
        <position position="35"/>
    </location>
    <ligand>
        <name>GTP</name>
        <dbReference type="ChEBI" id="CHEBI:37565"/>
    </ligand>
</feature>
<feature type="binding site" evidence="1">
    <location>
        <position position="46"/>
    </location>
    <ligand>
        <name>GTP</name>
        <dbReference type="ChEBI" id="CHEBI:37565"/>
    </ligand>
</feature>
<feature type="binding site" evidence="1">
    <location>
        <position position="47"/>
    </location>
    <ligand>
        <name>GTP</name>
        <dbReference type="ChEBI" id="CHEBI:37565"/>
    </ligand>
</feature>
<feature type="binding site" evidence="1">
    <location>
        <position position="52"/>
    </location>
    <ligand>
        <name>GTP</name>
        <dbReference type="ChEBI" id="CHEBI:37565"/>
    </ligand>
</feature>
<feature type="binding site" evidence="1">
    <location>
        <position position="52"/>
    </location>
    <ligand>
        <name>Mg(2+)</name>
        <dbReference type="ChEBI" id="CHEBI:18420"/>
    </ligand>
</feature>
<feature type="binding site" evidence="1">
    <location>
        <position position="78"/>
    </location>
    <ligand>
        <name>GTP</name>
        <dbReference type="ChEBI" id="CHEBI:37565"/>
    </ligand>
</feature>
<feature type="binding site" evidence="1">
    <location>
        <position position="133"/>
    </location>
    <ligand>
        <name>GTP</name>
        <dbReference type="ChEBI" id="CHEBI:37565"/>
    </ligand>
</feature>
<feature type="binding site" evidence="1">
    <location>
        <position position="134"/>
    </location>
    <ligand>
        <name>GTP</name>
        <dbReference type="ChEBI" id="CHEBI:37565"/>
    </ligand>
</feature>
<feature type="binding site" evidence="1">
    <location>
        <position position="136"/>
    </location>
    <ligand>
        <name>GTP</name>
        <dbReference type="ChEBI" id="CHEBI:37565"/>
    </ligand>
</feature>
<feature type="binding site" evidence="1">
    <location>
        <position position="164"/>
    </location>
    <ligand>
        <name>GTP</name>
        <dbReference type="ChEBI" id="CHEBI:37565"/>
    </ligand>
</feature>
<feature type="binding site" evidence="1">
    <location>
        <position position="165"/>
    </location>
    <ligand>
        <name>GTP</name>
        <dbReference type="ChEBI" id="CHEBI:37565"/>
    </ligand>
</feature>
<feature type="modified residue" description="Phosphoserine" evidence="1">
    <location>
        <position position="84"/>
    </location>
</feature>
<feature type="lipid moiety-binding region" description="S-geranylgeranyl cysteine" evidence="1">
    <location>
        <position position="212"/>
    </location>
</feature>
<feature type="lipid moiety-binding region" description="S-geranylgeranyl cysteine" evidence="1">
    <location>
        <position position="213"/>
    </location>
</feature>
<proteinExistence type="evidence at protein level"/>
<reference key="1">
    <citation type="journal article" date="1990" name="Cell">
        <title>Localization of low molecular weight GTP binding proteins to exocytic and endocytic compartments.</title>
        <authorList>
            <person name="Chavrier P."/>
            <person name="Parton R.G."/>
            <person name="Hauri H.P."/>
            <person name="Simons K."/>
            <person name="Zerial M."/>
        </authorList>
    </citation>
    <scope>NUCLEOTIDE SEQUENCE [MRNA]</scope>
    <scope>SUBCELLULAR LOCATION</scope>
</reference>
<reference key="2">
    <citation type="journal article" date="1990" name="Mol. Cell. Biol.">
        <title>Molecular cloning of YPT1/SEC4-related cDNAs from an epithelial cell line.</title>
        <authorList>
            <person name="Chavrier P."/>
            <person name="Vingron M."/>
            <person name="Sander C."/>
            <person name="Simons K."/>
            <person name="Zerial M."/>
        </authorList>
    </citation>
    <scope>NUCLEOTIDE SEQUENCE [MRNA]</scope>
    <source>
        <strain>Cocker spaniel</strain>
        <tissue>Kidney</tissue>
    </source>
</reference>
<reference key="3">
    <citation type="journal article" date="1995" name="Cell">
        <title>Rabaptin-5 is a direct effector of the small GTPase Rab5 in endocytic membrane fusion.</title>
        <authorList>
            <person name="Stenmark H."/>
            <person name="Vitale G."/>
            <person name="Ulrich O."/>
            <person name="Zerial M."/>
        </authorList>
    </citation>
    <scope>FUNCTION</scope>
    <scope>INTERACTION WITH RABEP1</scope>
</reference>
<reference key="4">
    <citation type="journal article" date="2010" name="J. Biol. Chem.">
        <title>Assembly of the biogenesis of lysosome-related organelles complex-3 (BLOC-3) and its interaction with Rab9.</title>
        <authorList>
            <person name="Kloer D.P."/>
            <person name="Rojas R."/>
            <person name="Ivan V."/>
            <person name="Moriyama K."/>
            <person name="van Vlijmen T."/>
            <person name="Murthy N."/>
            <person name="Ghirlando R."/>
            <person name="van der Sluijs P."/>
            <person name="Hurley J.H."/>
            <person name="Bonifacino J.S."/>
        </authorList>
    </citation>
    <scope>LACK OF INTERACTION WITH THE BLOC-3 COMPLEX</scope>
</reference>
<reference key="5">
    <citation type="journal article" date="2011" name="Biochim. Biophys. Acta">
        <title>Rin-like, a novel regulator of endocytosis, acts as guanine nucleotide exchange factor for Rab5a and Rab22.</title>
        <authorList>
            <person name="Woller B."/>
            <person name="Luiskandl S."/>
            <person name="Popovic M."/>
            <person name="Prieler B.E."/>
            <person name="Ikonge G."/>
            <person name="Mutzl M."/>
            <person name="Rehmann H."/>
            <person name="Herbst R."/>
        </authorList>
    </citation>
    <scope>INTERACTION WITH RINL</scope>
    <scope>ACTIVITY REGULATION</scope>
    <scope>SUBCELLULAR LOCATION</scope>
</reference>
<accession>P18066</accession>